<dbReference type="EMBL" id="CP000744">
    <property type="protein sequence ID" value="ABR81037.1"/>
    <property type="molecule type" value="Genomic_DNA"/>
</dbReference>
<dbReference type="RefSeq" id="WP_003153697.1">
    <property type="nucleotide sequence ID" value="NC_009656.1"/>
</dbReference>
<dbReference type="SMR" id="A6V7W8"/>
<dbReference type="GeneID" id="77221847"/>
<dbReference type="KEGG" id="pap:PSPA7_3799"/>
<dbReference type="HOGENOM" id="CLU_060739_1_2_6"/>
<dbReference type="Proteomes" id="UP000001582">
    <property type="component" value="Chromosome"/>
</dbReference>
<dbReference type="GO" id="GO:0003677">
    <property type="term" value="F:DNA binding"/>
    <property type="evidence" value="ECO:0007669"/>
    <property type="project" value="UniProtKB-UniRule"/>
</dbReference>
<dbReference type="GO" id="GO:0008270">
    <property type="term" value="F:zinc ion binding"/>
    <property type="evidence" value="ECO:0007669"/>
    <property type="project" value="UniProtKB-KW"/>
</dbReference>
<dbReference type="GO" id="GO:0006310">
    <property type="term" value="P:DNA recombination"/>
    <property type="evidence" value="ECO:0007669"/>
    <property type="project" value="UniProtKB-UniRule"/>
</dbReference>
<dbReference type="GO" id="GO:0006281">
    <property type="term" value="P:DNA repair"/>
    <property type="evidence" value="ECO:0007669"/>
    <property type="project" value="UniProtKB-UniRule"/>
</dbReference>
<dbReference type="CDD" id="cd01025">
    <property type="entry name" value="TOPRIM_recR"/>
    <property type="match status" value="1"/>
</dbReference>
<dbReference type="Gene3D" id="3.40.1360.10">
    <property type="match status" value="1"/>
</dbReference>
<dbReference type="Gene3D" id="6.10.250.240">
    <property type="match status" value="1"/>
</dbReference>
<dbReference type="Gene3D" id="1.10.8.420">
    <property type="entry name" value="RecR Domain 1"/>
    <property type="match status" value="1"/>
</dbReference>
<dbReference type="HAMAP" id="MF_00017">
    <property type="entry name" value="RecR"/>
    <property type="match status" value="1"/>
</dbReference>
<dbReference type="InterPro" id="IPR000093">
    <property type="entry name" value="DNA_Rcmb_RecR"/>
</dbReference>
<dbReference type="InterPro" id="IPR023627">
    <property type="entry name" value="Rcmb_RecR"/>
</dbReference>
<dbReference type="InterPro" id="IPR015967">
    <property type="entry name" value="Rcmb_RecR_Znf"/>
</dbReference>
<dbReference type="InterPro" id="IPR006171">
    <property type="entry name" value="TOPRIM_dom"/>
</dbReference>
<dbReference type="InterPro" id="IPR034137">
    <property type="entry name" value="TOPRIM_RecR"/>
</dbReference>
<dbReference type="NCBIfam" id="TIGR00615">
    <property type="entry name" value="recR"/>
    <property type="match status" value="1"/>
</dbReference>
<dbReference type="PANTHER" id="PTHR30446">
    <property type="entry name" value="RECOMBINATION PROTEIN RECR"/>
    <property type="match status" value="1"/>
</dbReference>
<dbReference type="PANTHER" id="PTHR30446:SF0">
    <property type="entry name" value="RECOMBINATION PROTEIN RECR"/>
    <property type="match status" value="1"/>
</dbReference>
<dbReference type="Pfam" id="PF21175">
    <property type="entry name" value="RecR_C"/>
    <property type="match status" value="1"/>
</dbReference>
<dbReference type="Pfam" id="PF21176">
    <property type="entry name" value="RecR_HhH"/>
    <property type="match status" value="1"/>
</dbReference>
<dbReference type="Pfam" id="PF02132">
    <property type="entry name" value="RecR_ZnF"/>
    <property type="match status" value="1"/>
</dbReference>
<dbReference type="Pfam" id="PF13662">
    <property type="entry name" value="Toprim_4"/>
    <property type="match status" value="1"/>
</dbReference>
<dbReference type="SMART" id="SM00493">
    <property type="entry name" value="TOPRIM"/>
    <property type="match status" value="1"/>
</dbReference>
<dbReference type="SUPFAM" id="SSF111304">
    <property type="entry name" value="Recombination protein RecR"/>
    <property type="match status" value="1"/>
</dbReference>
<dbReference type="PROSITE" id="PS01300">
    <property type="entry name" value="RECR"/>
    <property type="match status" value="1"/>
</dbReference>
<dbReference type="PROSITE" id="PS50880">
    <property type="entry name" value="TOPRIM"/>
    <property type="match status" value="1"/>
</dbReference>
<accession>A6V7W8</accession>
<comment type="function">
    <text evidence="1">May play a role in DNA repair. It seems to be involved in an RecBC-independent recombinational process of DNA repair. It may act with RecF and RecO.</text>
</comment>
<comment type="similarity">
    <text evidence="1">Belongs to the RecR family.</text>
</comment>
<evidence type="ECO:0000255" key="1">
    <source>
        <dbReference type="HAMAP-Rule" id="MF_00017"/>
    </source>
</evidence>
<feature type="chain" id="PRO_1000001581" description="Recombination protein RecR">
    <location>
        <begin position="1"/>
        <end position="198"/>
    </location>
</feature>
<feature type="domain" description="Toprim" evidence="1">
    <location>
        <begin position="80"/>
        <end position="174"/>
    </location>
</feature>
<feature type="zinc finger region" description="C4-type" evidence="1">
    <location>
        <begin position="57"/>
        <end position="72"/>
    </location>
</feature>
<organism>
    <name type="scientific">Pseudomonas paraeruginosa (strain DSM 24068 / PA7)</name>
    <name type="common">Pseudomonas aeruginosa (strain PA7)</name>
    <dbReference type="NCBI Taxonomy" id="381754"/>
    <lineage>
        <taxon>Bacteria</taxon>
        <taxon>Pseudomonadati</taxon>
        <taxon>Pseudomonadota</taxon>
        <taxon>Gammaproteobacteria</taxon>
        <taxon>Pseudomonadales</taxon>
        <taxon>Pseudomonadaceae</taxon>
        <taxon>Pseudomonas</taxon>
        <taxon>Pseudomonas paraeruginosa</taxon>
    </lineage>
</organism>
<reference key="1">
    <citation type="submission" date="2007-06" db="EMBL/GenBank/DDBJ databases">
        <authorList>
            <person name="Dodson R.J."/>
            <person name="Harkins D."/>
            <person name="Paulsen I.T."/>
        </authorList>
    </citation>
    <scope>NUCLEOTIDE SEQUENCE [LARGE SCALE GENOMIC DNA]</scope>
    <source>
        <strain>DSM 24068 / PA7</strain>
    </source>
</reference>
<keyword id="KW-0227">DNA damage</keyword>
<keyword id="KW-0233">DNA recombination</keyword>
<keyword id="KW-0234">DNA repair</keyword>
<keyword id="KW-0479">Metal-binding</keyword>
<keyword id="KW-0862">Zinc</keyword>
<keyword id="KW-0863">Zinc-finger</keyword>
<name>RECR_PSEP7</name>
<proteinExistence type="inferred from homology"/>
<protein>
    <recommendedName>
        <fullName evidence="1">Recombination protein RecR</fullName>
    </recommendedName>
</protein>
<sequence>MSFSPLIRQLIESLRILPGVGQKSAQRMALMLLERDRSGGLKLAQALTAAMEGVGHCRQCRTLSEEELCPQCADPRRDDSLLCVVEGPLDVFAVEQTGYRGRYFVLKGHLSPLDGLGPEAIGIPELDARIRDGAFSEVILATNPTVEGEATAHYIAQLLADRGLTLSRIAHGVPLGGELELVDGGTLAHALAGRRPIS</sequence>
<gene>
    <name evidence="1" type="primary">recR</name>
    <name type="ordered locus">PSPA7_3799</name>
</gene>